<feature type="signal peptide" evidence="2">
    <location>
        <begin position="1"/>
        <end position="21"/>
    </location>
</feature>
<feature type="chain" id="PRO_0000009451" description="Flagellar L-ring protein">
    <location>
        <begin position="22"/>
        <end position="237"/>
    </location>
</feature>
<feature type="region of interest" description="Disordered" evidence="3">
    <location>
        <begin position="87"/>
        <end position="111"/>
    </location>
</feature>
<evidence type="ECO:0000250" key="1"/>
<evidence type="ECO:0000255" key="2"/>
<evidence type="ECO:0000256" key="3">
    <source>
        <dbReference type="SAM" id="MobiDB-lite"/>
    </source>
</evidence>
<evidence type="ECO:0000305" key="4"/>
<dbReference type="EMBL" id="AE000511">
    <property type="protein sequence ID" value="AAD07392.1"/>
    <property type="molecule type" value="Genomic_DNA"/>
</dbReference>
<dbReference type="PIR" id="E64560">
    <property type="entry name" value="E64560"/>
</dbReference>
<dbReference type="RefSeq" id="NP_207123.1">
    <property type="nucleotide sequence ID" value="NC_000915.1"/>
</dbReference>
<dbReference type="RefSeq" id="WP_000709989.1">
    <property type="nucleotide sequence ID" value="NC_018939.1"/>
</dbReference>
<dbReference type="SMR" id="O25092"/>
<dbReference type="DIP" id="DIP-3206N"/>
<dbReference type="FunCoup" id="O25092">
    <property type="interactions" value="53"/>
</dbReference>
<dbReference type="IntAct" id="O25092">
    <property type="interactions" value="13"/>
</dbReference>
<dbReference type="MINT" id="O25092"/>
<dbReference type="STRING" id="85962.HP_0325"/>
<dbReference type="PaxDb" id="85962-C694_01645"/>
<dbReference type="DNASU" id="900196"/>
<dbReference type="EnsemblBacteria" id="AAD07392">
    <property type="protein sequence ID" value="AAD07392"/>
    <property type="gene ID" value="HP_0325"/>
</dbReference>
<dbReference type="KEGG" id="heo:C694_01645"/>
<dbReference type="KEGG" id="hpy:HP_0325"/>
<dbReference type="PATRIC" id="fig|85962.47.peg.348"/>
<dbReference type="eggNOG" id="COG2063">
    <property type="taxonomic scope" value="Bacteria"/>
</dbReference>
<dbReference type="InParanoid" id="O25092"/>
<dbReference type="OrthoDB" id="9789227at2"/>
<dbReference type="PhylomeDB" id="O25092"/>
<dbReference type="Proteomes" id="UP000000429">
    <property type="component" value="Chromosome"/>
</dbReference>
<dbReference type="GO" id="GO:0009427">
    <property type="term" value="C:bacterial-type flagellum basal body, distal rod, L ring"/>
    <property type="evidence" value="ECO:0007669"/>
    <property type="project" value="InterPro"/>
</dbReference>
<dbReference type="GO" id="GO:0009279">
    <property type="term" value="C:cell outer membrane"/>
    <property type="evidence" value="ECO:0007669"/>
    <property type="project" value="UniProtKB-SubCell"/>
</dbReference>
<dbReference type="GO" id="GO:0003774">
    <property type="term" value="F:cytoskeletal motor activity"/>
    <property type="evidence" value="ECO:0007669"/>
    <property type="project" value="InterPro"/>
</dbReference>
<dbReference type="GO" id="GO:0071973">
    <property type="term" value="P:bacterial-type flagellum-dependent cell motility"/>
    <property type="evidence" value="ECO:0007669"/>
    <property type="project" value="InterPro"/>
</dbReference>
<dbReference type="HAMAP" id="MF_00415">
    <property type="entry name" value="FlgH"/>
    <property type="match status" value="1"/>
</dbReference>
<dbReference type="InterPro" id="IPR000527">
    <property type="entry name" value="Flag_Lring"/>
</dbReference>
<dbReference type="NCBIfam" id="NF001303">
    <property type="entry name" value="PRK00249.1-3"/>
    <property type="match status" value="1"/>
</dbReference>
<dbReference type="PANTHER" id="PTHR34933">
    <property type="entry name" value="FLAGELLAR L-RING PROTEIN"/>
    <property type="match status" value="1"/>
</dbReference>
<dbReference type="PANTHER" id="PTHR34933:SF1">
    <property type="entry name" value="FLAGELLAR L-RING PROTEIN"/>
    <property type="match status" value="1"/>
</dbReference>
<dbReference type="Pfam" id="PF02107">
    <property type="entry name" value="FlgH"/>
    <property type="match status" value="1"/>
</dbReference>
<dbReference type="PRINTS" id="PR01008">
    <property type="entry name" value="FLGLRINGFLGH"/>
</dbReference>
<gene>
    <name type="primary">flgH</name>
    <name type="ordered locus">HP_0325</name>
</gene>
<protein>
    <recommendedName>
        <fullName>Flagellar L-ring protein</fullName>
    </recommendedName>
    <alternativeName>
        <fullName>Basal body L-ring protein</fullName>
    </alternativeName>
</protein>
<proteinExistence type="inferred from homology"/>
<keyword id="KW-0975">Bacterial flagellum</keyword>
<keyword id="KW-0998">Cell outer membrane</keyword>
<keyword id="KW-0472">Membrane</keyword>
<keyword id="KW-1185">Reference proteome</keyword>
<keyword id="KW-0732">Signal</keyword>
<reference key="1">
    <citation type="journal article" date="1997" name="Nature">
        <title>The complete genome sequence of the gastric pathogen Helicobacter pylori.</title>
        <authorList>
            <person name="Tomb J.-F."/>
            <person name="White O."/>
            <person name="Kerlavage A.R."/>
            <person name="Clayton R.A."/>
            <person name="Sutton G.G."/>
            <person name="Fleischmann R.D."/>
            <person name="Ketchum K.A."/>
            <person name="Klenk H.-P."/>
            <person name="Gill S.R."/>
            <person name="Dougherty B.A."/>
            <person name="Nelson K.E."/>
            <person name="Quackenbush J."/>
            <person name="Zhou L."/>
            <person name="Kirkness E.F."/>
            <person name="Peterson S.N."/>
            <person name="Loftus B.J."/>
            <person name="Richardson D.L."/>
            <person name="Dodson R.J."/>
            <person name="Khalak H.G."/>
            <person name="Glodek A."/>
            <person name="McKenney K."/>
            <person name="FitzGerald L.M."/>
            <person name="Lee N."/>
            <person name="Adams M.D."/>
            <person name="Hickey E.K."/>
            <person name="Berg D.E."/>
            <person name="Gocayne J.D."/>
            <person name="Utterback T.R."/>
            <person name="Peterson J.D."/>
            <person name="Kelley J.M."/>
            <person name="Cotton M.D."/>
            <person name="Weidman J.F."/>
            <person name="Fujii C."/>
            <person name="Bowman C."/>
            <person name="Watthey L."/>
            <person name="Wallin E."/>
            <person name="Hayes W.S."/>
            <person name="Borodovsky M."/>
            <person name="Karp P.D."/>
            <person name="Smith H.O."/>
            <person name="Fraser C.M."/>
            <person name="Venter J.C."/>
        </authorList>
    </citation>
    <scope>NUCLEOTIDE SEQUENCE [LARGE SCALE GENOMIC DNA]</scope>
    <source>
        <strain>ATCC 700392 / 26695</strain>
    </source>
</reference>
<accession>O25092</accession>
<comment type="function">
    <text evidence="1">Assembles around the rod to form the L-ring and probably protects the motor/basal body from shearing forces during rotation.</text>
</comment>
<comment type="subunit">
    <text evidence="1">The basal body constitutes a major portion of the flagellar organelle and consists of four rings (L,P,S, and M) mounted on a central rod.</text>
</comment>
<comment type="subcellular location">
    <subcellularLocation>
        <location evidence="1">Cell outer membrane</location>
    </subcellularLocation>
    <subcellularLocation>
        <location evidence="1">Bacterial flagellum basal body</location>
    </subcellularLocation>
</comment>
<comment type="similarity">
    <text evidence="4">Belongs to the FlgH family.</text>
</comment>
<sequence>MKKALYLGAVAFSVAFSMASANEPKIDFNPPNYVEETPSKEFIPELNKLGSLFGQGERPLFADRRAMKPNDLITIIVSEKASANYSSSKDYKSASGGNSTPPRLTYNGLDERKKKEAEYLDDKNNYNFTKSSNNTNFKGGGSQKKSEDLEIVLSARIIKVLENGNYFIYGNKEVLVDGEKQILKVSGVIRPYDIERNNTIQSKFLADAKIEYTNLGHLSDSNKKKFAADAMETQMPY</sequence>
<name>FLGH_HELPY</name>
<organism>
    <name type="scientific">Helicobacter pylori (strain ATCC 700392 / 26695)</name>
    <name type="common">Campylobacter pylori</name>
    <dbReference type="NCBI Taxonomy" id="85962"/>
    <lineage>
        <taxon>Bacteria</taxon>
        <taxon>Pseudomonadati</taxon>
        <taxon>Campylobacterota</taxon>
        <taxon>Epsilonproteobacteria</taxon>
        <taxon>Campylobacterales</taxon>
        <taxon>Helicobacteraceae</taxon>
        <taxon>Helicobacter</taxon>
    </lineage>
</organism>